<gene>
    <name type="primary">SAC8</name>
    <name type="synonym">G5</name>
    <name type="synonym">SAC1A</name>
    <name type="ordered locus">At3g51830</name>
    <name type="ORF">ATEM1.8</name>
</gene>
<keyword id="KW-0025">Alternative splicing</keyword>
<keyword id="KW-0256">Endoplasmic reticulum</keyword>
<keyword id="KW-0378">Hydrolase</keyword>
<keyword id="KW-0472">Membrane</keyword>
<keyword id="KW-1185">Reference proteome</keyword>
<keyword id="KW-0812">Transmembrane</keyword>
<keyword id="KW-1133">Transmembrane helix</keyword>
<name>SAC8_ARATH</name>
<protein>
    <recommendedName>
        <fullName>Phosphoinositide phosphatase SAC8</fullName>
        <shortName>AtSAC8</shortName>
        <ecNumber>3.1.3.-</ecNumber>
    </recommendedName>
    <alternativeName>
        <fullName>Protein SUPPRESSOR OF ACTIN 1A</fullName>
        <shortName>AtSAC1a</shortName>
    </alternativeName>
    <alternativeName>
        <fullName>Protein SUPPRESSOR OF ACTIN 8</fullName>
    </alternativeName>
    <alternativeName>
        <fullName>Putative transmembrane protein G5p</fullName>
        <shortName>AtG5</shortName>
    </alternativeName>
    <alternativeName>
        <fullName>SAC domain protein 8</fullName>
    </alternativeName>
    <alternativeName>
        <fullName>SAC1-like protein AtSAC1a</fullName>
    </alternativeName>
</protein>
<reference key="1">
    <citation type="submission" date="1996-09" db="EMBL/GenBank/DDBJ databases">
        <title>Structure of the Arabidopsis thaliana Em1 locus.</title>
        <authorList>
            <person name="Grellet F."/>
            <person name="Gaubier P."/>
            <person name="Wu H.-J."/>
            <person name="Laudie M."/>
            <person name="Berger C."/>
            <person name="Delseny M."/>
        </authorList>
    </citation>
    <scope>NUCLEOTIDE SEQUENCE [MRNA]</scope>
    <source>
        <strain>cv. Columbia</strain>
    </source>
</reference>
<reference key="2">
    <citation type="journal article" date="2003" name="Plant Physiol.">
        <title>The SAC domain-containing protein gene family in Arabidopsis.</title>
        <authorList>
            <person name="Zhong R."/>
            <person name="Ye Z.-H."/>
        </authorList>
    </citation>
    <scope>NUCLEOTIDE SEQUENCE [MRNA]</scope>
    <scope>GENE FAMILY</scope>
    <scope>DOMAIN</scope>
    <scope>TISSUE SPECIFICITY</scope>
</reference>
<reference key="3">
    <citation type="journal article" date="1999" name="Plant Mol. Biol.">
        <title>Fine sequence analysis of 60 kb around the Arabidopsis thaliana AtEm1 locus on chromosome III.</title>
        <authorList>
            <person name="Comella P."/>
            <person name="Wu H.-J."/>
            <person name="Laudie M."/>
            <person name="Berger C."/>
            <person name="Cooke R."/>
            <person name="Delseny M."/>
            <person name="Grellet F."/>
        </authorList>
    </citation>
    <scope>NUCLEOTIDE SEQUENCE [LARGE SCALE GENOMIC DNA]</scope>
    <source>
        <strain>cv. Columbia</strain>
    </source>
</reference>
<reference key="4">
    <citation type="journal article" date="2017" name="Plant J.">
        <title>Araport11: a complete reannotation of the Arabidopsis thaliana reference genome.</title>
        <authorList>
            <person name="Cheng C.Y."/>
            <person name="Krishnakumar V."/>
            <person name="Chan A.P."/>
            <person name="Thibaud-Nissen F."/>
            <person name="Schobel S."/>
            <person name="Town C.D."/>
        </authorList>
    </citation>
    <scope>GENOME REANNOTATION</scope>
    <source>
        <strain>cv. Columbia</strain>
    </source>
</reference>
<reference key="5">
    <citation type="journal article" date="2003" name="Science">
        <title>Empirical analysis of transcriptional activity in the Arabidopsis genome.</title>
        <authorList>
            <person name="Yamada K."/>
            <person name="Lim J."/>
            <person name="Dale J.M."/>
            <person name="Chen H."/>
            <person name="Shinn P."/>
            <person name="Palm C.J."/>
            <person name="Southwick A.M."/>
            <person name="Wu H.C."/>
            <person name="Kim C.J."/>
            <person name="Nguyen M."/>
            <person name="Pham P.K."/>
            <person name="Cheuk R.F."/>
            <person name="Karlin-Newmann G."/>
            <person name="Liu S.X."/>
            <person name="Lam B."/>
            <person name="Sakano H."/>
            <person name="Wu T."/>
            <person name="Yu G."/>
            <person name="Miranda M."/>
            <person name="Quach H.L."/>
            <person name="Tripp M."/>
            <person name="Chang C.H."/>
            <person name="Lee J.M."/>
            <person name="Toriumi M.J."/>
            <person name="Chan M.M."/>
            <person name="Tang C.C."/>
            <person name="Onodera C.S."/>
            <person name="Deng J.M."/>
            <person name="Akiyama K."/>
            <person name="Ansari Y."/>
            <person name="Arakawa T."/>
            <person name="Banh J."/>
            <person name="Banno F."/>
            <person name="Bowser L."/>
            <person name="Brooks S.Y."/>
            <person name="Carninci P."/>
            <person name="Chao Q."/>
            <person name="Choy N."/>
            <person name="Enju A."/>
            <person name="Goldsmith A.D."/>
            <person name="Gurjal M."/>
            <person name="Hansen N.F."/>
            <person name="Hayashizaki Y."/>
            <person name="Johnson-Hopson C."/>
            <person name="Hsuan V.W."/>
            <person name="Iida K."/>
            <person name="Karnes M."/>
            <person name="Khan S."/>
            <person name="Koesema E."/>
            <person name="Ishida J."/>
            <person name="Jiang P.X."/>
            <person name="Jones T."/>
            <person name="Kawai J."/>
            <person name="Kamiya A."/>
            <person name="Meyers C."/>
            <person name="Nakajima M."/>
            <person name="Narusaka M."/>
            <person name="Seki M."/>
            <person name="Sakurai T."/>
            <person name="Satou M."/>
            <person name="Tamse R."/>
            <person name="Vaysberg M."/>
            <person name="Wallender E.K."/>
            <person name="Wong C."/>
            <person name="Yamamura Y."/>
            <person name="Yuan S."/>
            <person name="Shinozaki K."/>
            <person name="Davis R.W."/>
            <person name="Theologis A."/>
            <person name="Ecker J.R."/>
        </authorList>
    </citation>
    <scope>NUCLEOTIDE SEQUENCE [LARGE SCALE MRNA]</scope>
    <source>
        <strain>cv. Columbia</strain>
    </source>
</reference>
<reference key="6">
    <citation type="journal article" date="2003" name="Plant J.">
        <title>Three SAC1-like genes show overlapping patterns of expression in Arabidopsis but are remarkably silent during embryo development.</title>
        <authorList>
            <person name="Despres B."/>
            <person name="Bouissonnie F."/>
            <person name="Wu H.J."/>
            <person name="Gomord V."/>
            <person name="Guilleminot J."/>
            <person name="Grellet F."/>
            <person name="Berger F."/>
            <person name="Delseny M."/>
            <person name="Devic M."/>
        </authorList>
    </citation>
    <scope>TISSUE SPECIFICITY</scope>
    <scope>FUNCTION</scope>
    <scope>SUBCELLULAR LOCATION</scope>
</reference>
<feature type="chain" id="PRO_0000421974" description="Phosphoinositide phosphatase SAC8">
    <location>
        <begin position="1"/>
        <end position="588"/>
    </location>
</feature>
<feature type="transmembrane region" description="Helical" evidence="2">
    <location>
        <begin position="524"/>
        <end position="544"/>
    </location>
</feature>
<feature type="transmembrane region" description="Helical" evidence="2">
    <location>
        <begin position="555"/>
        <end position="575"/>
    </location>
</feature>
<feature type="domain" description="SAC" evidence="3">
    <location>
        <begin position="129"/>
        <end position="455"/>
    </location>
</feature>
<feature type="region of interest" description="Disordered" evidence="4">
    <location>
        <begin position="37"/>
        <end position="56"/>
    </location>
</feature>
<feature type="short sequence motif" description="Phosphatase catalytic core">
    <location>
        <begin position="390"/>
        <end position="401"/>
    </location>
</feature>
<feature type="compositionally biased region" description="Basic and acidic residues" evidence="4">
    <location>
        <begin position="40"/>
        <end position="50"/>
    </location>
</feature>
<organism>
    <name type="scientific">Arabidopsis thaliana</name>
    <name type="common">Mouse-ear cress</name>
    <dbReference type="NCBI Taxonomy" id="3702"/>
    <lineage>
        <taxon>Eukaryota</taxon>
        <taxon>Viridiplantae</taxon>
        <taxon>Streptophyta</taxon>
        <taxon>Embryophyta</taxon>
        <taxon>Tracheophyta</taxon>
        <taxon>Spermatophyta</taxon>
        <taxon>Magnoliopsida</taxon>
        <taxon>eudicotyledons</taxon>
        <taxon>Gunneridae</taxon>
        <taxon>Pentapetalae</taxon>
        <taxon>rosids</taxon>
        <taxon>malvids</taxon>
        <taxon>Brassicales</taxon>
        <taxon>Brassicaceae</taxon>
        <taxon>Camelineae</taxon>
        <taxon>Arabidopsis</taxon>
    </lineage>
</organism>
<dbReference type="EC" id="3.1.3.-"/>
<dbReference type="EMBL" id="U72504">
    <property type="protein sequence ID" value="AAB18128.1"/>
    <property type="molecule type" value="mRNA"/>
</dbReference>
<dbReference type="EMBL" id="AY227251">
    <property type="protein sequence ID" value="AAP49841.1"/>
    <property type="molecule type" value="mRNA"/>
</dbReference>
<dbReference type="EMBL" id="AF049236">
    <property type="protein sequence ID" value="AAC14410.1"/>
    <property type="molecule type" value="Genomic_DNA"/>
</dbReference>
<dbReference type="EMBL" id="CP002686">
    <property type="protein sequence ID" value="AEE78849.1"/>
    <property type="molecule type" value="Genomic_DNA"/>
</dbReference>
<dbReference type="EMBL" id="AY080659">
    <property type="protein sequence ID" value="AAL86335.1"/>
    <property type="molecule type" value="mRNA"/>
</dbReference>
<dbReference type="EMBL" id="AY133741">
    <property type="protein sequence ID" value="AAM91675.1"/>
    <property type="molecule type" value="mRNA"/>
</dbReference>
<dbReference type="PIR" id="T51154">
    <property type="entry name" value="T51154"/>
</dbReference>
<dbReference type="RefSeq" id="NP_190751.2">
    <molecule id="Q96328-1"/>
    <property type="nucleotide sequence ID" value="NM_115042.3"/>
</dbReference>
<dbReference type="SMR" id="Q96328"/>
<dbReference type="BioGRID" id="9664">
    <property type="interactions" value="1"/>
</dbReference>
<dbReference type="FunCoup" id="Q96328">
    <property type="interactions" value="5012"/>
</dbReference>
<dbReference type="IntAct" id="Q96328">
    <property type="interactions" value="1"/>
</dbReference>
<dbReference type="STRING" id="3702.Q96328"/>
<dbReference type="iPTMnet" id="Q96328"/>
<dbReference type="PaxDb" id="3702-AT3G51830.1"/>
<dbReference type="ProteomicsDB" id="226663">
    <molecule id="Q96328-1"/>
</dbReference>
<dbReference type="EnsemblPlants" id="AT3G51830.1">
    <molecule id="Q96328-1"/>
    <property type="protein sequence ID" value="AT3G51830.1"/>
    <property type="gene ID" value="AT3G51830"/>
</dbReference>
<dbReference type="GeneID" id="824346"/>
<dbReference type="Gramene" id="AT3G51830.1">
    <molecule id="Q96328-1"/>
    <property type="protein sequence ID" value="AT3G51830.1"/>
    <property type="gene ID" value="AT3G51830"/>
</dbReference>
<dbReference type="KEGG" id="ath:AT3G51830"/>
<dbReference type="Araport" id="AT3G51830"/>
<dbReference type="TAIR" id="AT3G51830">
    <property type="gene designation" value="SAC8"/>
</dbReference>
<dbReference type="eggNOG" id="KOG1889">
    <property type="taxonomic scope" value="Eukaryota"/>
</dbReference>
<dbReference type="HOGENOM" id="CLU_003016_7_2_1"/>
<dbReference type="InParanoid" id="Q96328"/>
<dbReference type="OMA" id="QHFITSI"/>
<dbReference type="PhylomeDB" id="Q96328"/>
<dbReference type="BioCyc" id="ARA:AT3G51830-MONOMER"/>
<dbReference type="PRO" id="PR:Q96328"/>
<dbReference type="Proteomes" id="UP000006548">
    <property type="component" value="Chromosome 3"/>
</dbReference>
<dbReference type="ExpressionAtlas" id="Q96328">
    <property type="expression patterns" value="baseline and differential"/>
</dbReference>
<dbReference type="GO" id="GO:0005783">
    <property type="term" value="C:endoplasmic reticulum"/>
    <property type="evidence" value="ECO:0000314"/>
    <property type="project" value="UniProtKB"/>
</dbReference>
<dbReference type="GO" id="GO:0005789">
    <property type="term" value="C:endoplasmic reticulum membrane"/>
    <property type="evidence" value="ECO:0007669"/>
    <property type="project" value="UniProtKB-SubCell"/>
</dbReference>
<dbReference type="GO" id="GO:0016791">
    <property type="term" value="F:phosphatase activity"/>
    <property type="evidence" value="ECO:0007669"/>
    <property type="project" value="InterPro"/>
</dbReference>
<dbReference type="InterPro" id="IPR002013">
    <property type="entry name" value="SAC_dom"/>
</dbReference>
<dbReference type="PANTHER" id="PTHR45662">
    <property type="entry name" value="PHOSPHATIDYLINOSITIDE PHOSPHATASE SAC1"/>
    <property type="match status" value="1"/>
</dbReference>
<dbReference type="PANTHER" id="PTHR45662:SF10">
    <property type="entry name" value="PHOSPHOINOSITIDE PHOSPHATASE SAC8"/>
    <property type="match status" value="1"/>
</dbReference>
<dbReference type="Pfam" id="PF02383">
    <property type="entry name" value="Syja_N"/>
    <property type="match status" value="1"/>
</dbReference>
<dbReference type="PROSITE" id="PS50275">
    <property type="entry name" value="SAC"/>
    <property type="match status" value="1"/>
</dbReference>
<evidence type="ECO:0000250" key="1"/>
<evidence type="ECO:0000255" key="2"/>
<evidence type="ECO:0000255" key="3">
    <source>
        <dbReference type="PROSITE-ProRule" id="PRU00183"/>
    </source>
</evidence>
<evidence type="ECO:0000256" key="4">
    <source>
        <dbReference type="SAM" id="MobiDB-lite"/>
    </source>
</evidence>
<evidence type="ECO:0000269" key="5">
    <source>
    </source>
</evidence>
<evidence type="ECO:0000269" key="6">
    <source>
    </source>
</evidence>
<sequence length="588" mass="66464">MEIAPSTSRFKLYDQFELLEFPDKYVVKPIESPEEGFSVNRRDGNIKPLDENASSGSPTRVSTIYGVGGTIRLLAGTYLLVITSREEVGNFLGLPIFRVTAMKFLPCNEALRFATAQEKKDETYFRTLLQALETTPGLYFSYETDLTLNLQRRCKLAEGWNRKPMWKQADPRYVWNWHLLEDLIECKLDGFIIPILQGSYQVAELKLKNSPAVVSIMSRRCTRRLGTRMWRRGANLEGDAANFVESEQIVEINGFKFSLLQVRGSIPLLWEQIVDLSYKPRLKINKHEETPKVVQRHFHDLCQRYGEIMAVDLTDQHGDEGALSKAYATEMEKLPDVRYVSFDFHQVCGTTNFDNLGVLYEQIGDEFEKQGYFLVDADENILEEQKGVIRSNCIDCLDRTNVTQSFMGQKSLNLQLQRIGVCDSTECISTFEDDYTKFRTIWAEQGDEVSLQYAGTYALKGDLVRYGKQTMTGAIKDGLSAMSRYYLNNFQDGVRQDALDLISGRYTVGTHSPSQLQPIGSQPSFLPVASALLIGGVTVTSFTIHQAGRNTQQYLASALWAGVTAGVVAMIKANGRHLTSRPRLCHLI</sequence>
<proteinExistence type="evidence at transcript level"/>
<comment type="function">
    <text evidence="5">Phosphoinositide phosphatase that hydrolyzes PtdIns(3)P and PtdIns(4)P.</text>
</comment>
<comment type="subcellular location">
    <subcellularLocation>
        <location evidence="5">Endoplasmic reticulum membrane</location>
        <topology evidence="5">Multi-pass membrane protein</topology>
    </subcellularLocation>
</comment>
<comment type="alternative products">
    <event type="alternative splicing"/>
    <isoform>
        <id>Q96328-1</id>
        <name>1</name>
        <sequence type="displayed"/>
    </isoform>
    <text>A number of isoforms are produced. According to EST sequences.</text>
</comment>
<comment type="tissue specificity">
    <text evidence="5 6">Ubiquitous with a higher level of expression in young seedlings than in other tissues.</text>
</comment>
<comment type="domain">
    <text evidence="1">The phosphatase catalytic core motif (or RXNCXDCLDRTN motif) from the SAC domain is found in metal-independent protein phosphatases and inositol polyphosphate phosphatases.</text>
</comment>
<accession>Q96328</accession>